<dbReference type="EMBL" id="CP000462">
    <property type="protein sequence ID" value="ABK37694.1"/>
    <property type="molecule type" value="Genomic_DNA"/>
</dbReference>
<dbReference type="RefSeq" id="WP_011706277.1">
    <property type="nucleotide sequence ID" value="NC_008570.1"/>
</dbReference>
<dbReference type="RefSeq" id="YP_856959.1">
    <property type="nucleotide sequence ID" value="NC_008570.1"/>
</dbReference>
<dbReference type="SMR" id="A0KL08"/>
<dbReference type="STRING" id="380703.AHA_2444"/>
<dbReference type="EnsemblBacteria" id="ABK37694">
    <property type="protein sequence ID" value="ABK37694"/>
    <property type="gene ID" value="AHA_2444"/>
</dbReference>
<dbReference type="GeneID" id="4489310"/>
<dbReference type="KEGG" id="aha:AHA_2444"/>
<dbReference type="PATRIC" id="fig|380703.7.peg.2443"/>
<dbReference type="eggNOG" id="COG3067">
    <property type="taxonomic scope" value="Bacteria"/>
</dbReference>
<dbReference type="HOGENOM" id="CLU_041110_0_0_6"/>
<dbReference type="OrthoDB" id="5288732at2"/>
<dbReference type="Proteomes" id="UP000000756">
    <property type="component" value="Chromosome"/>
</dbReference>
<dbReference type="GO" id="GO:0005886">
    <property type="term" value="C:plasma membrane"/>
    <property type="evidence" value="ECO:0007669"/>
    <property type="project" value="UniProtKB-SubCell"/>
</dbReference>
<dbReference type="GO" id="GO:0015385">
    <property type="term" value="F:sodium:proton antiporter activity"/>
    <property type="evidence" value="ECO:0007669"/>
    <property type="project" value="InterPro"/>
</dbReference>
<dbReference type="HAMAP" id="MF_01599">
    <property type="entry name" value="NhaB"/>
    <property type="match status" value="1"/>
</dbReference>
<dbReference type="InterPro" id="IPR004671">
    <property type="entry name" value="Na+/H+_antiporter_NhaB"/>
</dbReference>
<dbReference type="NCBIfam" id="TIGR00774">
    <property type="entry name" value="NhaB"/>
    <property type="match status" value="1"/>
</dbReference>
<dbReference type="NCBIfam" id="NF007093">
    <property type="entry name" value="PRK09547.1"/>
    <property type="match status" value="1"/>
</dbReference>
<dbReference type="PANTHER" id="PTHR43302:SF1">
    <property type="entry name" value="NA(+)_H(+) ANTIPORTER NHAB"/>
    <property type="match status" value="1"/>
</dbReference>
<dbReference type="PANTHER" id="PTHR43302">
    <property type="entry name" value="TRANSPORTER ARSB-RELATED"/>
    <property type="match status" value="1"/>
</dbReference>
<dbReference type="Pfam" id="PF06450">
    <property type="entry name" value="NhaB"/>
    <property type="match status" value="1"/>
</dbReference>
<organism>
    <name type="scientific">Aeromonas hydrophila subsp. hydrophila (strain ATCC 7966 / DSM 30187 / BCRC 13018 / CCUG 14551 / JCM 1027 / KCTC 2358 / NCIMB 9240 / NCTC 8049)</name>
    <dbReference type="NCBI Taxonomy" id="380703"/>
    <lineage>
        <taxon>Bacteria</taxon>
        <taxon>Pseudomonadati</taxon>
        <taxon>Pseudomonadota</taxon>
        <taxon>Gammaproteobacteria</taxon>
        <taxon>Aeromonadales</taxon>
        <taxon>Aeromonadaceae</taxon>
        <taxon>Aeromonas</taxon>
    </lineage>
</organism>
<sequence length="526" mass="57520">MPISLGQAFARNFLGNAPQWYKAAILLFLLINPIAFYLDPFIAGWLLVVEFIFTLAMALKCYPLQPGGLLAIEAVLIGMTSAKQVKHELVANIEVLLLLVFMVAGIYFMKQLLLYVFTKLLIRIHSKTLLSLAFCLVSAFLSAFLDALTVIAVVISVATGFYAIYHKVSSGKEFGNPHDHTDDDAVNELNRQHLDDFRAFLRSLMMHAAIGTALGGVCTLVGEPQNLIIGEQAGWNFGEFAIRMSPVTVPVFICGLLTCVLVEKCRWFGYGAKLPDAVRRIMEDYNRYEEAGRTAQDKAKLIVQAAIALWLILGLAMHLAAVGLIGLSVIVLATSLTGITEEHSLGKAFQEALPFTALLAVFFSVVAVIIDQQLFKPVIQWVLAAEPDAQLALFYLANGLLSMVSDNVFVGTVYINEVKTALLNNAISREQFELLAVAINTGTNLPSVATPNGQAAFLFMLTSALAPLLRLSYGRMVWMALPYTLVLGLVGFFSVEMLLGPLTDWFYQAGWLVLDNVAPAALPVLH</sequence>
<feature type="chain" id="PRO_0000333082" description="Na(+)/H(+) antiporter NhaB">
    <location>
        <begin position="1"/>
        <end position="526"/>
    </location>
</feature>
<feature type="transmembrane region" description="Helical" evidence="1">
    <location>
        <begin position="25"/>
        <end position="45"/>
    </location>
</feature>
<feature type="transmembrane region" description="Helical" evidence="1">
    <location>
        <begin position="52"/>
        <end position="72"/>
    </location>
</feature>
<feature type="transmembrane region" description="Helical" evidence="1">
    <location>
        <begin position="89"/>
        <end position="109"/>
    </location>
</feature>
<feature type="transmembrane region" description="Helical" evidence="1">
    <location>
        <begin position="130"/>
        <end position="164"/>
    </location>
</feature>
<feature type="transmembrane region" description="Helical" evidence="1">
    <location>
        <begin position="204"/>
        <end position="224"/>
    </location>
</feature>
<feature type="transmembrane region" description="Helical" evidence="1">
    <location>
        <begin position="242"/>
        <end position="262"/>
    </location>
</feature>
<feature type="transmembrane region" description="Helical" evidence="1">
    <location>
        <begin position="307"/>
        <end position="327"/>
    </location>
</feature>
<feature type="transmembrane region" description="Helical" evidence="1">
    <location>
        <begin position="350"/>
        <end position="370"/>
    </location>
</feature>
<feature type="transmembrane region" description="Helical" evidence="1">
    <location>
        <begin position="391"/>
        <end position="411"/>
    </location>
</feature>
<feature type="transmembrane region" description="Helical" evidence="1">
    <location>
        <begin position="448"/>
        <end position="468"/>
    </location>
</feature>
<feature type="transmembrane region" description="Helical" evidence="1">
    <location>
        <begin position="479"/>
        <end position="499"/>
    </location>
</feature>
<feature type="transmembrane region" description="Helical" evidence="1">
    <location>
        <begin position="505"/>
        <end position="525"/>
    </location>
</feature>
<proteinExistence type="inferred from homology"/>
<accession>A0KL08</accession>
<protein>
    <recommendedName>
        <fullName evidence="1">Na(+)/H(+) antiporter NhaB</fullName>
    </recommendedName>
    <alternativeName>
        <fullName evidence="1">Sodium/proton antiporter NhaB</fullName>
    </alternativeName>
</protein>
<comment type="function">
    <text evidence="1">Na(+)/H(+) antiporter that extrudes sodium in exchange for external protons.</text>
</comment>
<comment type="catalytic activity">
    <reaction evidence="1">
        <text>2 Na(+)(in) + 3 H(+)(out) = 2 Na(+)(out) + 3 H(+)(in)</text>
        <dbReference type="Rhea" id="RHEA:29247"/>
        <dbReference type="ChEBI" id="CHEBI:15378"/>
        <dbReference type="ChEBI" id="CHEBI:29101"/>
    </reaction>
    <physiologicalReaction direction="left-to-right" evidence="1">
        <dbReference type="Rhea" id="RHEA:29248"/>
    </physiologicalReaction>
</comment>
<comment type="subcellular location">
    <subcellularLocation>
        <location evidence="1">Cell inner membrane</location>
        <topology evidence="1">Multi-pass membrane protein</topology>
    </subcellularLocation>
</comment>
<comment type="similarity">
    <text evidence="1">Belongs to the NhaB Na(+)/H(+) (TC 2.A.34) antiporter family.</text>
</comment>
<name>NHAB_AERHH</name>
<gene>
    <name evidence="1" type="primary">nhaB</name>
    <name type="ordered locus">AHA_2444</name>
</gene>
<evidence type="ECO:0000255" key="1">
    <source>
        <dbReference type="HAMAP-Rule" id="MF_01599"/>
    </source>
</evidence>
<keyword id="KW-0050">Antiport</keyword>
<keyword id="KW-0997">Cell inner membrane</keyword>
<keyword id="KW-1003">Cell membrane</keyword>
<keyword id="KW-0406">Ion transport</keyword>
<keyword id="KW-0472">Membrane</keyword>
<keyword id="KW-1185">Reference proteome</keyword>
<keyword id="KW-0915">Sodium</keyword>
<keyword id="KW-0739">Sodium transport</keyword>
<keyword id="KW-0812">Transmembrane</keyword>
<keyword id="KW-1133">Transmembrane helix</keyword>
<keyword id="KW-0813">Transport</keyword>
<reference key="1">
    <citation type="journal article" date="2006" name="J. Bacteriol.">
        <title>Genome sequence of Aeromonas hydrophila ATCC 7966T: jack of all trades.</title>
        <authorList>
            <person name="Seshadri R."/>
            <person name="Joseph S.W."/>
            <person name="Chopra A.K."/>
            <person name="Sha J."/>
            <person name="Shaw J."/>
            <person name="Graf J."/>
            <person name="Haft D.H."/>
            <person name="Wu M."/>
            <person name="Ren Q."/>
            <person name="Rosovitz M.J."/>
            <person name="Madupu R."/>
            <person name="Tallon L."/>
            <person name="Kim M."/>
            <person name="Jin S."/>
            <person name="Vuong H."/>
            <person name="Stine O.C."/>
            <person name="Ali A."/>
            <person name="Horneman A.J."/>
            <person name="Heidelberg J.F."/>
        </authorList>
    </citation>
    <scope>NUCLEOTIDE SEQUENCE [LARGE SCALE GENOMIC DNA]</scope>
    <source>
        <strain>ATCC 7966 / DSM 30187 / BCRC 13018 / CCUG 14551 / JCM 1027 / KCTC 2358 / NCIMB 9240 / NCTC 8049</strain>
    </source>
</reference>